<name>VOME_RAT</name>
<protein>
    <recommendedName>
        <fullName evidence="7">Vomeromodulin</fullName>
    </recommendedName>
    <alternativeName>
        <fullName evidence="1">BPI fold-containing family B member 9</fullName>
    </alternativeName>
</protein>
<keyword id="KW-0325">Glycoprotein</keyword>
<keyword id="KW-1185">Reference proteome</keyword>
<keyword id="KW-0964">Secreted</keyword>
<keyword id="KW-0732">Signal</keyword>
<organism>
    <name type="scientific">Rattus norvegicus</name>
    <name type="common">Rat</name>
    <dbReference type="NCBI Taxonomy" id="10116"/>
    <lineage>
        <taxon>Eukaryota</taxon>
        <taxon>Metazoa</taxon>
        <taxon>Chordata</taxon>
        <taxon>Craniata</taxon>
        <taxon>Vertebrata</taxon>
        <taxon>Euteleostomi</taxon>
        <taxon>Mammalia</taxon>
        <taxon>Eutheria</taxon>
        <taxon>Euarchontoglires</taxon>
        <taxon>Glires</taxon>
        <taxon>Rodentia</taxon>
        <taxon>Myomorpha</taxon>
        <taxon>Muroidea</taxon>
        <taxon>Muridae</taxon>
        <taxon>Murinae</taxon>
        <taxon>Rattus</taxon>
    </lineage>
</organism>
<proteinExistence type="evidence at protein level"/>
<comment type="subcellular location">
    <subcellularLocation>
        <location evidence="5">Secreted</location>
    </subcellularLocation>
</comment>
<comment type="tissue specificity">
    <text evidence="5 6">Abundant in the lateral nasal glands (PubMed:1752363, PubMed:1915264). Also present in the posterior septal and vomeronasal glands (PubMed:1752363).</text>
</comment>
<comment type="PTM">
    <text evidence="4 5">N-glycosylated (PubMed:10049729, PubMed:1752363). The N-glycans consist mainly of complex sialylated and fucosylated biantennary structures (PubMed:10049729).</text>
</comment>
<comment type="sequence caution" evidence="9">
    <conflict type="erroneous initiation">
        <sequence resource="EMBL-CDS" id="CAA43066"/>
    </conflict>
    <text>Truncated N-terminus.</text>
</comment>
<comment type="sequence caution" evidence="9">
    <conflict type="frameshift">
        <sequence resource="EMBL-CDS" id="CAA43066"/>
    </conflict>
</comment>
<feature type="signal peptide" evidence="2">
    <location>
        <begin position="1"/>
        <end position="29"/>
    </location>
</feature>
<feature type="chain" id="PRO_0000065878" description="Vomeromodulin">
    <location>
        <begin position="30"/>
        <end position="589"/>
    </location>
</feature>
<feature type="region of interest" description="Disordered" evidence="3">
    <location>
        <begin position="49"/>
        <end position="71"/>
    </location>
</feature>
<feature type="region of interest" description="Disordered" evidence="3">
    <location>
        <begin position="146"/>
        <end position="170"/>
    </location>
</feature>
<feature type="glycosylation site" description="N-linked (GlcNAc...) asparagine" evidence="2">
    <location>
        <position position="419"/>
    </location>
</feature>
<feature type="glycosylation site" description="N-linked (GlcNAc...) asparagine" evidence="2">
    <location>
        <position position="437"/>
    </location>
</feature>
<feature type="sequence conflict" description="In Ref. 1; CAA43066." evidence="9" ref="1">
    <original>S</original>
    <variation>C</variation>
    <location>
        <position position="510"/>
    </location>
</feature>
<sequence>MWVLQALAIMLSIQAGVLDLVEVPPVVRSLPVALPAPVNLPAVLPGSPGLNDPAKNRMLPPKRPGAPSRGGKCAPAARYFLSSDKLQAYLLSILPPQIEDMVKCDKVNMEGVLGDILATMQDSNLLSILDITSLLQGGGGLGLGGLLGKEGNEDPSKPSSGSKATGGLGQLLPEGLPGKEGLGGLLNLGGGKGSGKGLLNGDGLSNVVKPLDDIVENVDSLKAAVQDKVKSVVPENIKDPFSDLLNMDIQETMLKLKVKQVKVGSTDINMGADGIKVLSEVTADVEGEGLLGPVFTLLQFQSVMDVTMNIAVSSNNTQCVNLDVQDTHMHVKEMNIQLLQTVTETVPLPTSLPLNDIIPIVLTAKMNENLEKSDSCGIVLSDFNDCKNTTGLFGYQVHTARISPKGLSIDYCVKANIDNKTVPVPGGRLPPDPKNANVSITTASSALRTLVKYVAKQSSVQMNDLEAQITYIAFAPQENNMLRLLYKVDITKDSQPYATGETKLFISHASKILNSKLVPDVKLTRSEHSVVPPETKEEVEGIMAEVTRKAWSRFNELYKKMSIPDGVSSNTLTNSDVKLLRSNDLQAAS</sequence>
<dbReference type="EMBL" id="X60659">
    <property type="protein sequence ID" value="CAA43066.1"/>
    <property type="status" value="ALT_SEQ"/>
    <property type="molecule type" value="mRNA"/>
</dbReference>
<dbReference type="EMBL" id="X63911">
    <property type="protein sequence ID" value="CAA45366.1"/>
    <property type="molecule type" value="mRNA"/>
</dbReference>
<dbReference type="PIR" id="S23808">
    <property type="entry name" value="S23808"/>
</dbReference>
<dbReference type="FunCoup" id="Q63751">
    <property type="interactions" value="1"/>
</dbReference>
<dbReference type="STRING" id="10116.ENSRNOP00000065522"/>
<dbReference type="GlyConnect" id="626">
    <property type="glycosylation" value="3 N-Linked glycans"/>
</dbReference>
<dbReference type="GlyCosmos" id="Q63751">
    <property type="glycosylation" value="2 sites, 5 glycans"/>
</dbReference>
<dbReference type="GlyGen" id="Q63751">
    <property type="glycosylation" value="3 sites, 5 N-linked glycans (1 site)"/>
</dbReference>
<dbReference type="PhosphoSitePlus" id="Q63751"/>
<dbReference type="PaxDb" id="10116-ENSRNOP00000065522"/>
<dbReference type="UCSC" id="RGD:1594746">
    <property type="organism name" value="rat"/>
</dbReference>
<dbReference type="AGR" id="RGD:1594746"/>
<dbReference type="RGD" id="1594746">
    <property type="gene designation" value="LOC690507"/>
</dbReference>
<dbReference type="eggNOG" id="ENOG502TKQD">
    <property type="taxonomic scope" value="Eukaryota"/>
</dbReference>
<dbReference type="InParanoid" id="Q63751"/>
<dbReference type="PRO" id="PR:Q63751"/>
<dbReference type="Proteomes" id="UP000002494">
    <property type="component" value="Unplaced"/>
</dbReference>
<dbReference type="GO" id="GO:0005576">
    <property type="term" value="C:extracellular region"/>
    <property type="evidence" value="ECO:0007669"/>
    <property type="project" value="UniProtKB-SubCell"/>
</dbReference>
<dbReference type="GO" id="GO:0007608">
    <property type="term" value="P:sensory perception of smell"/>
    <property type="evidence" value="ECO:0007669"/>
    <property type="project" value="InterPro"/>
</dbReference>
<dbReference type="InterPro" id="IPR034433">
    <property type="entry name" value="Vomeromodulin"/>
</dbReference>
<dbReference type="PANTHER" id="PTHR40142:SF1">
    <property type="entry name" value="BPI FOLD CONTAINING FAMILY B, MEMBER 9B-RELATED"/>
    <property type="match status" value="1"/>
</dbReference>
<dbReference type="PANTHER" id="PTHR40142">
    <property type="entry name" value="BPI FOLD-CONTAINING FAMILY B, MEMBER 9B-RELATED"/>
    <property type="match status" value="1"/>
</dbReference>
<reference key="1">
    <citation type="journal article" date="1991" name="EMBO J.">
        <title>Novel genes for potential ligand-binding proteins in subregions of the olfactory mucosa.</title>
        <authorList>
            <person name="Dear T.N."/>
            <person name="Boehm T."/>
            <person name="Keverne E.B."/>
            <person name="Rabbitts T.H."/>
        </authorList>
    </citation>
    <scope>NUCLEOTIDE SEQUENCE [MRNA]</scope>
    <scope>TISSUE SPECIFICITY</scope>
    <source>
        <strain evidence="10">Fischer</strain>
        <tissue evidence="10">Olfactory epithelium</tissue>
    </source>
</reference>
<reference key="2">
    <citation type="journal article" date="1991" name="FASEB J.">
        <title>Vomeromodulin, a putative pheromone transporter: cloning, characterization, and cellular localization of a novel glycoprotein of lateral nasal gland.</title>
        <authorList>
            <person name="Khew-Goodall Y.S."/>
            <person name="Grillo M."/>
            <person name="Getchell M.L."/>
            <person name="Danho W."/>
            <person name="Getchell T.V."/>
            <person name="Margolis F.L."/>
        </authorList>
    </citation>
    <scope>NUCLEOTIDE SEQUENCE [MRNA] OF 493-589</scope>
    <scope>SUBCELLULAR LOCATION</scope>
    <scope>TISSUE SPECIFICITY</scope>
    <scope>GLYCOSYLATION</scope>
    <source>
        <strain evidence="11">CD Charles River</strain>
        <tissue evidence="11">Nasal mucosa</tissue>
    </source>
</reference>
<reference key="3">
    <citation type="journal article" date="1999" name="Biochem. Biophys. Res. Commun.">
        <title>N-linked oligosaccharides of vomeromodulin, a putative pheromone transporter in rat.</title>
        <authorList>
            <person name="Mechref Y."/>
            <person name="Ma W."/>
            <person name="Hao G."/>
            <person name="Novotny M.V."/>
        </authorList>
    </citation>
    <scope>STRUCTURE OF CARBOHYDRATES</scope>
</reference>
<gene>
    <name evidence="1" type="primary">Bpifb9</name>
    <name evidence="8" type="synonym">RYF3</name>
</gene>
<evidence type="ECO:0000250" key="1">
    <source>
        <dbReference type="UniProtKB" id="Q80XI7"/>
    </source>
</evidence>
<evidence type="ECO:0000255" key="2"/>
<evidence type="ECO:0000256" key="3">
    <source>
        <dbReference type="SAM" id="MobiDB-lite"/>
    </source>
</evidence>
<evidence type="ECO:0000269" key="4">
    <source>
    </source>
</evidence>
<evidence type="ECO:0000269" key="5">
    <source>
    </source>
</evidence>
<evidence type="ECO:0000269" key="6">
    <source>
    </source>
</evidence>
<evidence type="ECO:0000303" key="7">
    <source>
    </source>
</evidence>
<evidence type="ECO:0000303" key="8">
    <source>
    </source>
</evidence>
<evidence type="ECO:0000305" key="9"/>
<evidence type="ECO:0000312" key="10">
    <source>
        <dbReference type="EMBL" id="CAA43066.1"/>
    </source>
</evidence>
<evidence type="ECO:0000312" key="11">
    <source>
        <dbReference type="EMBL" id="CAA45366.1"/>
    </source>
</evidence>
<accession>Q63751</accession>
<accession>Q05703</accession>